<proteinExistence type="inferred from homology"/>
<reference key="1">
    <citation type="journal article" date="2003" name="Nat. Genet.">
        <title>Comparative analysis of the genome sequences of Bordetella pertussis, Bordetella parapertussis and Bordetella bronchiseptica.</title>
        <authorList>
            <person name="Parkhill J."/>
            <person name="Sebaihia M."/>
            <person name="Preston A."/>
            <person name="Murphy L.D."/>
            <person name="Thomson N.R."/>
            <person name="Harris D.E."/>
            <person name="Holden M.T.G."/>
            <person name="Churcher C.M."/>
            <person name="Bentley S.D."/>
            <person name="Mungall K.L."/>
            <person name="Cerdeno-Tarraga A.-M."/>
            <person name="Temple L."/>
            <person name="James K.D."/>
            <person name="Harris B."/>
            <person name="Quail M.A."/>
            <person name="Achtman M."/>
            <person name="Atkin R."/>
            <person name="Baker S."/>
            <person name="Basham D."/>
            <person name="Bason N."/>
            <person name="Cherevach I."/>
            <person name="Chillingworth T."/>
            <person name="Collins M."/>
            <person name="Cronin A."/>
            <person name="Davis P."/>
            <person name="Doggett J."/>
            <person name="Feltwell T."/>
            <person name="Goble A."/>
            <person name="Hamlin N."/>
            <person name="Hauser H."/>
            <person name="Holroyd S."/>
            <person name="Jagels K."/>
            <person name="Leather S."/>
            <person name="Moule S."/>
            <person name="Norberczak H."/>
            <person name="O'Neil S."/>
            <person name="Ormond D."/>
            <person name="Price C."/>
            <person name="Rabbinowitsch E."/>
            <person name="Rutter S."/>
            <person name="Sanders M."/>
            <person name="Saunders D."/>
            <person name="Seeger K."/>
            <person name="Sharp S."/>
            <person name="Simmonds M."/>
            <person name="Skelton J."/>
            <person name="Squares R."/>
            <person name="Squares S."/>
            <person name="Stevens K."/>
            <person name="Unwin L."/>
            <person name="Whitehead S."/>
            <person name="Barrell B.G."/>
            <person name="Maskell D.J."/>
        </authorList>
    </citation>
    <scope>NUCLEOTIDE SEQUENCE [LARGE SCALE GENOMIC DNA]</scope>
    <source>
        <strain>ATCC BAA-588 / NCTC 13252 / RB50</strain>
    </source>
</reference>
<reference key="2">
    <citation type="journal article" date="1987" name="J. Bacteriol.">
        <title>Bordetella parapertussis and Bordetella bronchiseptica contain transcriptionally silent pertussis toxin genes.</title>
        <authorList>
            <person name="Arico B."/>
            <person name="Rappuoli R."/>
        </authorList>
    </citation>
    <scope>TRANSCRIPTIONAL SILENCING</scope>
    <source>
        <strain>ATCC 4617 / NCIB 9935 / NCTC 8344 / NRRL B-140</strain>
    </source>
</reference>
<reference key="3">
    <citation type="journal article" date="1996" name="Infect. Immun.">
        <title>Analysis of proteins encoded by the ptx and ptl genes of Bordetella bronchiseptica and Bordetella parapertussis.</title>
        <authorList>
            <person name="Hausman S.Z."/>
            <person name="Cherry J.D."/>
            <person name="Heininger U."/>
            <person name="Wirsing von Koenig C.H."/>
            <person name="Burns D.L."/>
        </authorList>
    </citation>
    <scope>POSSIBLE EXPRESSION OF PTL AND PTX PROTEINS UNDER CONDITIONS DIFFERENT FROM B.PERTUSSIS EXPRESSION CONDITIONS</scope>
    <source>
        <strain>ATCC 31437 / Bb55</strain>
    </source>
</reference>
<keyword id="KW-0732">Signal</keyword>
<evidence type="ECO:0000255" key="1"/>
<evidence type="ECO:0000305" key="2"/>
<protein>
    <recommendedName>
        <fullName>Pertussis toxin subunit 1 homolog</fullName>
    </recommendedName>
</protein>
<dbReference type="EMBL" id="BX640451">
    <property type="protein sequence ID" value="CAE35253.1"/>
    <property type="molecule type" value="Genomic_DNA"/>
</dbReference>
<dbReference type="RefSeq" id="WP_003815848.1">
    <property type="nucleotide sequence ID" value="NC_002927.3"/>
</dbReference>
<dbReference type="SMR" id="Q7WDU8"/>
<dbReference type="GeneID" id="56476611"/>
<dbReference type="KEGG" id="bbr:BB4890"/>
<dbReference type="eggNOG" id="ENOG50339NB">
    <property type="taxonomic scope" value="Bacteria"/>
</dbReference>
<dbReference type="HOGENOM" id="CLU_1145818_0_0_4"/>
<dbReference type="PHI-base" id="PHI:9186"/>
<dbReference type="Proteomes" id="UP000001027">
    <property type="component" value="Chromosome"/>
</dbReference>
<dbReference type="GO" id="GO:0005576">
    <property type="term" value="C:extracellular region"/>
    <property type="evidence" value="ECO:0007669"/>
    <property type="project" value="InterPro"/>
</dbReference>
<dbReference type="GO" id="GO:0003950">
    <property type="term" value="F:NAD+ poly-ADP-ribosyltransferase activity"/>
    <property type="evidence" value="ECO:0007669"/>
    <property type="project" value="InterPro"/>
</dbReference>
<dbReference type="Gene3D" id="3.90.210.10">
    <property type="entry name" value="Heat-Labile Enterotoxin, subunit A"/>
    <property type="match status" value="1"/>
</dbReference>
<dbReference type="InterPro" id="IPR003898">
    <property type="entry name" value="Borpert_toxA"/>
</dbReference>
<dbReference type="Pfam" id="PF02917">
    <property type="entry name" value="Pertussis_S1"/>
    <property type="match status" value="1"/>
</dbReference>
<dbReference type="PRINTS" id="PR01395">
    <property type="entry name" value="BORPETOXINA"/>
</dbReference>
<dbReference type="SUPFAM" id="SSF56399">
    <property type="entry name" value="ADP-ribosylation"/>
    <property type="match status" value="1"/>
</dbReference>
<comment type="similarity">
    <text evidence="2">Belongs to the bacterial exotoxin subunit A family.</text>
</comment>
<comment type="caution">
    <text evidence="2">B.parapertussis and B.bronchiseptica seem not to produce the pertussis toxin (S1, S2, S4, S5 and S3) and Ptl proteins (PtlA, PtlB, PtlC, PtlD, PtlE, PtlF, PtlG, PtlH and PtlI) in vivo due to changes in the promoter region of the ptx-ptl operon. However, it is possible that their promoter is active under certain, as-yet-undefined conditions and that B.parapertussis and B.bronchiseptica are therefore capable of producing these proteins.</text>
</comment>
<sequence>MRCTRAIRQTARTGWLTWLAILAVTAPVTSPAWADDPPATVYRYDSRPPEDVFQNGFTAWGNNDNVLEHLTGRSCQVGSSNSAFVSTSSSRRYTEVYLEHRMQEAVEAERAGRGTGHFIGYIYEVRADNNFYGAASSYFEYVDTYGDNAGRILAGALATYQSEYLAHRRIPPENIRRVTRVYHNGITGETTTTEYPNARYVSQQTRANPNPYTSRRSVASIVGTLVRMAPVTGACMARQAESPEAMAAWSERAGEAMVLVYYESIAYSF</sequence>
<organism>
    <name type="scientific">Bordetella bronchiseptica (strain ATCC BAA-588 / NCTC 13252 / RB50)</name>
    <name type="common">Alcaligenes bronchisepticus</name>
    <dbReference type="NCBI Taxonomy" id="257310"/>
    <lineage>
        <taxon>Bacteria</taxon>
        <taxon>Pseudomonadati</taxon>
        <taxon>Pseudomonadota</taxon>
        <taxon>Betaproteobacteria</taxon>
        <taxon>Burkholderiales</taxon>
        <taxon>Alcaligenaceae</taxon>
        <taxon>Bordetella</taxon>
    </lineage>
</organism>
<feature type="signal peptide" evidence="1">
    <location>
        <begin position="1"/>
        <end position="34"/>
    </location>
</feature>
<feature type="chain" id="PRO_0000251141" description="Pertussis toxin subunit 1 homolog">
    <location>
        <begin position="35"/>
        <end position="269"/>
    </location>
</feature>
<accession>Q7WDU8</accession>
<gene>
    <name type="primary">ptxA</name>
    <name type="ordered locus">BB4890</name>
</gene>
<name>TOX1_BORBR</name>